<feature type="chain" id="PRO_0000348836" description="tRNA-cytidine(32) 2-sulfurtransferase">
    <location>
        <begin position="1"/>
        <end position="312"/>
    </location>
</feature>
<feature type="short sequence motif" description="PP-loop motif" evidence="1">
    <location>
        <begin position="47"/>
        <end position="52"/>
    </location>
</feature>
<feature type="binding site" evidence="1">
    <location>
        <position position="122"/>
    </location>
    <ligand>
        <name>[4Fe-4S] cluster</name>
        <dbReference type="ChEBI" id="CHEBI:49883"/>
    </ligand>
</feature>
<feature type="binding site" evidence="1">
    <location>
        <position position="125"/>
    </location>
    <ligand>
        <name>[4Fe-4S] cluster</name>
        <dbReference type="ChEBI" id="CHEBI:49883"/>
    </ligand>
</feature>
<feature type="binding site" evidence="1">
    <location>
        <position position="213"/>
    </location>
    <ligand>
        <name>[4Fe-4S] cluster</name>
        <dbReference type="ChEBI" id="CHEBI:49883"/>
    </ligand>
</feature>
<evidence type="ECO:0000255" key="1">
    <source>
        <dbReference type="HAMAP-Rule" id="MF_01850"/>
    </source>
</evidence>
<gene>
    <name evidence="1" type="primary">ttcA</name>
    <name type="ordered locus">Sfri_2020</name>
</gene>
<sequence length="312" mass="35086">MSEVDTIAKQNITRMNKLQKRLRHEVGSAIADYNMIEDGDRVMCCLSGGKDSYTMLDILLTLQQRAPIKFEIVAVNLDQKQPGFPEHVLPAYLDKLGVAYHILEKDTYSIVKEKIPEGKTTCSLCSRLRRGTLYGFAQHIGATKIALGHHRDDIIETMFLNMFYAGKQKAMPPKLLSDDGANMVIRPLAYCREKDIEEYSTLKSFPIIPCNLCGSQENLKRGAVKDMLQMWDKQHPGRIETIFTAMQNTSPSQGVDRENFDFISLKRNPDAVNTGDVADADLPAFDFVDISNNGHINLDISNRIDVVATFKP</sequence>
<proteinExistence type="inferred from homology"/>
<protein>
    <recommendedName>
        <fullName evidence="1">tRNA-cytidine(32) 2-sulfurtransferase</fullName>
        <ecNumber evidence="1">2.8.1.-</ecNumber>
    </recommendedName>
    <alternativeName>
        <fullName evidence="1">Two-thiocytidine biosynthesis protein A</fullName>
    </alternativeName>
    <alternativeName>
        <fullName evidence="1">tRNA 2-thiocytidine biosynthesis protein TtcA</fullName>
    </alternativeName>
</protein>
<name>TTCA_SHEFN</name>
<comment type="function">
    <text evidence="1">Catalyzes the ATP-dependent 2-thiolation of cytidine in position 32 of tRNA, to form 2-thiocytidine (s(2)C32). The sulfur atoms are provided by the cysteine/cysteine desulfurase (IscS) system.</text>
</comment>
<comment type="catalytic activity">
    <reaction evidence="1">
        <text>cytidine(32) in tRNA + S-sulfanyl-L-cysteinyl-[cysteine desulfurase] + AH2 + ATP = 2-thiocytidine(32) in tRNA + L-cysteinyl-[cysteine desulfurase] + A + AMP + diphosphate + H(+)</text>
        <dbReference type="Rhea" id="RHEA:57048"/>
        <dbReference type="Rhea" id="RHEA-COMP:10288"/>
        <dbReference type="Rhea" id="RHEA-COMP:12157"/>
        <dbReference type="Rhea" id="RHEA-COMP:12158"/>
        <dbReference type="Rhea" id="RHEA-COMP:14821"/>
        <dbReference type="ChEBI" id="CHEBI:13193"/>
        <dbReference type="ChEBI" id="CHEBI:15378"/>
        <dbReference type="ChEBI" id="CHEBI:17499"/>
        <dbReference type="ChEBI" id="CHEBI:29950"/>
        <dbReference type="ChEBI" id="CHEBI:30616"/>
        <dbReference type="ChEBI" id="CHEBI:33019"/>
        <dbReference type="ChEBI" id="CHEBI:61963"/>
        <dbReference type="ChEBI" id="CHEBI:82748"/>
        <dbReference type="ChEBI" id="CHEBI:141453"/>
        <dbReference type="ChEBI" id="CHEBI:456215"/>
    </reaction>
    <physiologicalReaction direction="left-to-right" evidence="1">
        <dbReference type="Rhea" id="RHEA:57049"/>
    </physiologicalReaction>
</comment>
<comment type="cofactor">
    <cofactor evidence="1">
        <name>Mg(2+)</name>
        <dbReference type="ChEBI" id="CHEBI:18420"/>
    </cofactor>
</comment>
<comment type="cofactor">
    <cofactor evidence="1">
        <name>[4Fe-4S] cluster</name>
        <dbReference type="ChEBI" id="CHEBI:49883"/>
    </cofactor>
    <text evidence="1">Binds 1 [4Fe-4S] cluster per subunit. The cluster is chelated by three Cys residues, the fourth Fe has a free coordination site that may bind a sulfur atom transferred from the persulfide of IscS.</text>
</comment>
<comment type="pathway">
    <text evidence="1">tRNA modification.</text>
</comment>
<comment type="subunit">
    <text evidence="1">Homodimer.</text>
</comment>
<comment type="subcellular location">
    <subcellularLocation>
        <location evidence="1">Cytoplasm</location>
    </subcellularLocation>
</comment>
<comment type="miscellaneous">
    <text evidence="1">The thiolation reaction likely consists of two steps: a first activation step by ATP to form an adenylated intermediate of the target base of tRNA, and a second nucleophilic substitution step of the sulfur (S) atom supplied by the hydrosulfide attached to the Fe-S cluster.</text>
</comment>
<comment type="similarity">
    <text evidence="1">Belongs to the TtcA family.</text>
</comment>
<keyword id="KW-0004">4Fe-4S</keyword>
<keyword id="KW-0067">ATP-binding</keyword>
<keyword id="KW-0963">Cytoplasm</keyword>
<keyword id="KW-0408">Iron</keyword>
<keyword id="KW-0411">Iron-sulfur</keyword>
<keyword id="KW-0460">Magnesium</keyword>
<keyword id="KW-0479">Metal-binding</keyword>
<keyword id="KW-0547">Nucleotide-binding</keyword>
<keyword id="KW-1185">Reference proteome</keyword>
<keyword id="KW-0694">RNA-binding</keyword>
<keyword id="KW-0808">Transferase</keyword>
<keyword id="KW-0819">tRNA processing</keyword>
<keyword id="KW-0820">tRNA-binding</keyword>
<dbReference type="EC" id="2.8.1.-" evidence="1"/>
<dbReference type="EMBL" id="CP000447">
    <property type="protein sequence ID" value="ABI71866.1"/>
    <property type="molecule type" value="Genomic_DNA"/>
</dbReference>
<dbReference type="RefSeq" id="WP_011637481.1">
    <property type="nucleotide sequence ID" value="NC_008345.1"/>
</dbReference>
<dbReference type="SMR" id="Q082E9"/>
<dbReference type="STRING" id="318167.Sfri_2020"/>
<dbReference type="KEGG" id="sfr:Sfri_2020"/>
<dbReference type="eggNOG" id="COG0037">
    <property type="taxonomic scope" value="Bacteria"/>
</dbReference>
<dbReference type="HOGENOM" id="CLU_026481_0_0_6"/>
<dbReference type="OrthoDB" id="9801054at2"/>
<dbReference type="Proteomes" id="UP000000684">
    <property type="component" value="Chromosome"/>
</dbReference>
<dbReference type="GO" id="GO:0005737">
    <property type="term" value="C:cytoplasm"/>
    <property type="evidence" value="ECO:0007669"/>
    <property type="project" value="UniProtKB-SubCell"/>
</dbReference>
<dbReference type="GO" id="GO:0051539">
    <property type="term" value="F:4 iron, 4 sulfur cluster binding"/>
    <property type="evidence" value="ECO:0007669"/>
    <property type="project" value="UniProtKB-UniRule"/>
</dbReference>
<dbReference type="GO" id="GO:0005524">
    <property type="term" value="F:ATP binding"/>
    <property type="evidence" value="ECO:0007669"/>
    <property type="project" value="UniProtKB-UniRule"/>
</dbReference>
<dbReference type="GO" id="GO:0000287">
    <property type="term" value="F:magnesium ion binding"/>
    <property type="evidence" value="ECO:0007669"/>
    <property type="project" value="UniProtKB-UniRule"/>
</dbReference>
<dbReference type="GO" id="GO:0016783">
    <property type="term" value="F:sulfurtransferase activity"/>
    <property type="evidence" value="ECO:0007669"/>
    <property type="project" value="UniProtKB-UniRule"/>
</dbReference>
<dbReference type="GO" id="GO:0000049">
    <property type="term" value="F:tRNA binding"/>
    <property type="evidence" value="ECO:0007669"/>
    <property type="project" value="UniProtKB-KW"/>
</dbReference>
<dbReference type="GO" id="GO:0034227">
    <property type="term" value="P:tRNA thio-modification"/>
    <property type="evidence" value="ECO:0007669"/>
    <property type="project" value="UniProtKB-UniRule"/>
</dbReference>
<dbReference type="CDD" id="cd24138">
    <property type="entry name" value="TtcA-like"/>
    <property type="match status" value="1"/>
</dbReference>
<dbReference type="Gene3D" id="3.40.50.620">
    <property type="entry name" value="HUPs"/>
    <property type="match status" value="1"/>
</dbReference>
<dbReference type="HAMAP" id="MF_01850">
    <property type="entry name" value="TtcA"/>
    <property type="match status" value="1"/>
</dbReference>
<dbReference type="InterPro" id="IPR014729">
    <property type="entry name" value="Rossmann-like_a/b/a_fold"/>
</dbReference>
<dbReference type="InterPro" id="IPR011063">
    <property type="entry name" value="TilS/TtcA_N"/>
</dbReference>
<dbReference type="InterPro" id="IPR012089">
    <property type="entry name" value="tRNA_Cyd_32_2_STrfase"/>
</dbReference>
<dbReference type="NCBIfam" id="NF007972">
    <property type="entry name" value="PRK10696.1"/>
    <property type="match status" value="1"/>
</dbReference>
<dbReference type="PANTHER" id="PTHR43686:SF1">
    <property type="entry name" value="AMINOTRAN_5 DOMAIN-CONTAINING PROTEIN"/>
    <property type="match status" value="1"/>
</dbReference>
<dbReference type="PANTHER" id="PTHR43686">
    <property type="entry name" value="SULFURTRANSFERASE-RELATED"/>
    <property type="match status" value="1"/>
</dbReference>
<dbReference type="Pfam" id="PF01171">
    <property type="entry name" value="ATP_bind_3"/>
    <property type="match status" value="1"/>
</dbReference>
<dbReference type="SUPFAM" id="SSF52402">
    <property type="entry name" value="Adenine nucleotide alpha hydrolases-like"/>
    <property type="match status" value="1"/>
</dbReference>
<reference key="1">
    <citation type="submission" date="2006-08" db="EMBL/GenBank/DDBJ databases">
        <title>Complete sequence of Shewanella frigidimarina NCIMB 400.</title>
        <authorList>
            <consortium name="US DOE Joint Genome Institute"/>
            <person name="Copeland A."/>
            <person name="Lucas S."/>
            <person name="Lapidus A."/>
            <person name="Barry K."/>
            <person name="Detter J.C."/>
            <person name="Glavina del Rio T."/>
            <person name="Hammon N."/>
            <person name="Israni S."/>
            <person name="Dalin E."/>
            <person name="Tice H."/>
            <person name="Pitluck S."/>
            <person name="Fredrickson J.K."/>
            <person name="Kolker E."/>
            <person name="McCuel L.A."/>
            <person name="DiChristina T."/>
            <person name="Nealson K.H."/>
            <person name="Newman D."/>
            <person name="Tiedje J.M."/>
            <person name="Zhou J."/>
            <person name="Romine M.F."/>
            <person name="Culley D.E."/>
            <person name="Serres M."/>
            <person name="Chertkov O."/>
            <person name="Brettin T."/>
            <person name="Bruce D."/>
            <person name="Han C."/>
            <person name="Tapia R."/>
            <person name="Gilna P."/>
            <person name="Schmutz J."/>
            <person name="Larimer F."/>
            <person name="Land M."/>
            <person name="Hauser L."/>
            <person name="Kyrpides N."/>
            <person name="Mikhailova N."/>
            <person name="Richardson P."/>
        </authorList>
    </citation>
    <scope>NUCLEOTIDE SEQUENCE [LARGE SCALE GENOMIC DNA]</scope>
    <source>
        <strain>NCIMB 400</strain>
    </source>
</reference>
<accession>Q082E9</accession>
<organism>
    <name type="scientific">Shewanella frigidimarina (strain NCIMB 400)</name>
    <dbReference type="NCBI Taxonomy" id="318167"/>
    <lineage>
        <taxon>Bacteria</taxon>
        <taxon>Pseudomonadati</taxon>
        <taxon>Pseudomonadota</taxon>
        <taxon>Gammaproteobacteria</taxon>
        <taxon>Alteromonadales</taxon>
        <taxon>Shewanellaceae</taxon>
        <taxon>Shewanella</taxon>
    </lineage>
</organism>